<feature type="signal peptide" evidence="1">
    <location>
        <begin position="1"/>
        <end position="30"/>
    </location>
</feature>
<feature type="chain" id="PRO_1000064454" description="Periplasmic trehalase">
    <location>
        <begin position="31"/>
        <end position="565"/>
    </location>
</feature>
<feature type="region of interest" description="Disordered" evidence="2">
    <location>
        <begin position="539"/>
        <end position="565"/>
    </location>
</feature>
<feature type="active site" description="Proton donor/acceptor" evidence="1">
    <location>
        <position position="312"/>
    </location>
</feature>
<feature type="active site" description="Proton donor/acceptor" evidence="1">
    <location>
        <position position="496"/>
    </location>
</feature>
<feature type="binding site" evidence="1">
    <location>
        <position position="152"/>
    </location>
    <ligand>
        <name>substrate</name>
    </ligand>
</feature>
<feature type="binding site" evidence="1">
    <location>
        <begin position="159"/>
        <end position="160"/>
    </location>
    <ligand>
        <name>substrate</name>
    </ligand>
</feature>
<feature type="binding site" evidence="1">
    <location>
        <position position="196"/>
    </location>
    <ligand>
        <name>substrate</name>
    </ligand>
</feature>
<feature type="binding site" evidence="1">
    <location>
        <begin position="205"/>
        <end position="207"/>
    </location>
    <ligand>
        <name>substrate</name>
    </ligand>
</feature>
<feature type="binding site" evidence="1">
    <location>
        <begin position="277"/>
        <end position="279"/>
    </location>
    <ligand>
        <name>substrate</name>
    </ligand>
</feature>
<feature type="binding site" evidence="1">
    <location>
        <position position="310"/>
    </location>
    <ligand>
        <name>substrate</name>
    </ligand>
</feature>
<feature type="binding site" evidence="1">
    <location>
        <position position="511"/>
    </location>
    <ligand>
        <name>substrate</name>
    </ligand>
</feature>
<organism>
    <name type="scientific">Escherichia coli (strain UTI89 / UPEC)</name>
    <dbReference type="NCBI Taxonomy" id="364106"/>
    <lineage>
        <taxon>Bacteria</taxon>
        <taxon>Pseudomonadati</taxon>
        <taxon>Pseudomonadota</taxon>
        <taxon>Gammaproteobacteria</taxon>
        <taxon>Enterobacterales</taxon>
        <taxon>Enterobacteriaceae</taxon>
        <taxon>Escherichia</taxon>
    </lineage>
</organism>
<sequence length="565" mass="63766">MKSPAPSRPQKMALIPACIFLCFAALSVQAEETSVTPQPPDILLGPLFNDVQNAKLFPDQKTFADAVPNSDPLMILADYRMQQNQSGFDLRHFVNVNFTLPKEGEKYVPPEGQSLREHIDGLWPVLTRSTENTEKWDSLLPLPKPYVVPGGRFREVYYWDSYFTMLGLAESGHWDKVADMVANFAHEIDNYGHIPNGNRSYYLSRSQPPFFALMVELLAQHEGDAALKQYLPQMQKEYAYWMDGVENLQAGQQEKRVVKLQDGTLLNRYWDDRDTPRPESWVEDIATAKSNPNRPATEIYRDLRSAAASGWDFSSRWMDNPQQLNTLRTTSIVPVDLNSLMFKMEKILARASKAIGDNAMANQYETLANARQKGIEKYLWNDQQGWYADYDLKSHKVRNQLTAAALFPLYVNAAAKDRASKMATATKTHLLQPGGLNTTSVKSGQQWDAPNGWAPLQWVATEGLQNYGQKEVAMDISWHFLTNVQHTYDREKKLVEKYDVSTTGTGGGGGEYPLQDGFGWTNGVTLKMLDLICPKEQPCDNVPATRPLSESTTQPLKQKEAEPTP</sequence>
<accession>Q1RCP3</accession>
<comment type="function">
    <text evidence="1">Provides the cells with the ability to utilize trehalose at high osmolarity by splitting it into glucose molecules that can subsequently be taken up by the phosphotransferase-mediated uptake system.</text>
</comment>
<comment type="catalytic activity">
    <reaction evidence="1">
        <text>alpha,alpha-trehalose + H2O = alpha-D-glucose + beta-D-glucose</text>
        <dbReference type="Rhea" id="RHEA:32675"/>
        <dbReference type="ChEBI" id="CHEBI:15377"/>
        <dbReference type="ChEBI" id="CHEBI:15903"/>
        <dbReference type="ChEBI" id="CHEBI:16551"/>
        <dbReference type="ChEBI" id="CHEBI:17925"/>
        <dbReference type="EC" id="3.2.1.28"/>
    </reaction>
</comment>
<comment type="subunit">
    <text evidence="1">Monomer.</text>
</comment>
<comment type="subcellular location">
    <subcellularLocation>
        <location evidence="1">Periplasm</location>
    </subcellularLocation>
</comment>
<comment type="similarity">
    <text evidence="1">Belongs to the glycosyl hydrolase 37 family.</text>
</comment>
<keyword id="KW-0326">Glycosidase</keyword>
<keyword id="KW-0378">Hydrolase</keyword>
<keyword id="KW-0574">Periplasm</keyword>
<keyword id="KW-0732">Signal</keyword>
<dbReference type="EC" id="3.2.1.28" evidence="1"/>
<dbReference type="EMBL" id="CP000243">
    <property type="protein sequence ID" value="ABE06871.1"/>
    <property type="molecule type" value="Genomic_DNA"/>
</dbReference>
<dbReference type="RefSeq" id="WP_000841739.1">
    <property type="nucleotide sequence ID" value="NZ_CP064825.1"/>
</dbReference>
<dbReference type="SMR" id="Q1RCP3"/>
<dbReference type="CAZy" id="GH37">
    <property type="family name" value="Glycoside Hydrolase Family 37"/>
</dbReference>
<dbReference type="KEGG" id="eci:UTI89_C1389"/>
<dbReference type="HOGENOM" id="CLU_006451_3_1_6"/>
<dbReference type="Proteomes" id="UP000001952">
    <property type="component" value="Chromosome"/>
</dbReference>
<dbReference type="GO" id="GO:0042597">
    <property type="term" value="C:periplasmic space"/>
    <property type="evidence" value="ECO:0007669"/>
    <property type="project" value="UniProtKB-SubCell"/>
</dbReference>
<dbReference type="GO" id="GO:0004555">
    <property type="term" value="F:alpha,alpha-trehalase activity"/>
    <property type="evidence" value="ECO:0007669"/>
    <property type="project" value="UniProtKB-UniRule"/>
</dbReference>
<dbReference type="GO" id="GO:0071474">
    <property type="term" value="P:cellular hyperosmotic response"/>
    <property type="evidence" value="ECO:0007669"/>
    <property type="project" value="InterPro"/>
</dbReference>
<dbReference type="GO" id="GO:0005993">
    <property type="term" value="P:trehalose catabolic process"/>
    <property type="evidence" value="ECO:0007669"/>
    <property type="project" value="InterPro"/>
</dbReference>
<dbReference type="FunFam" id="1.50.10.10:FF:000003">
    <property type="entry name" value="Cytoplasmic trehalase"/>
    <property type="match status" value="1"/>
</dbReference>
<dbReference type="Gene3D" id="1.50.10.10">
    <property type="match status" value="1"/>
</dbReference>
<dbReference type="HAMAP" id="MF_01060">
    <property type="entry name" value="Peripl_trehalase"/>
    <property type="match status" value="1"/>
</dbReference>
<dbReference type="InterPro" id="IPR008928">
    <property type="entry name" value="6-hairpin_glycosidase_sf"/>
</dbReference>
<dbReference type="InterPro" id="IPR012341">
    <property type="entry name" value="6hp_glycosidase-like_sf"/>
</dbReference>
<dbReference type="InterPro" id="IPR001661">
    <property type="entry name" value="Glyco_hydro_37"/>
</dbReference>
<dbReference type="InterPro" id="IPR018232">
    <property type="entry name" value="Glyco_hydro_37_CS"/>
</dbReference>
<dbReference type="InterPro" id="IPR023720">
    <property type="entry name" value="Trehalase_periplasmic"/>
</dbReference>
<dbReference type="NCBIfam" id="NF009773">
    <property type="entry name" value="PRK13270.1"/>
    <property type="match status" value="1"/>
</dbReference>
<dbReference type="NCBIfam" id="NF009774">
    <property type="entry name" value="PRK13271.1"/>
    <property type="match status" value="1"/>
</dbReference>
<dbReference type="PANTHER" id="PTHR23403">
    <property type="entry name" value="TREHALASE"/>
    <property type="match status" value="1"/>
</dbReference>
<dbReference type="PANTHER" id="PTHR23403:SF1">
    <property type="entry name" value="TREHALASE"/>
    <property type="match status" value="1"/>
</dbReference>
<dbReference type="Pfam" id="PF01204">
    <property type="entry name" value="Trehalase"/>
    <property type="match status" value="1"/>
</dbReference>
<dbReference type="PRINTS" id="PR00744">
    <property type="entry name" value="GLHYDRLASE37"/>
</dbReference>
<dbReference type="SUPFAM" id="SSF48208">
    <property type="entry name" value="Six-hairpin glycosidases"/>
    <property type="match status" value="1"/>
</dbReference>
<dbReference type="PROSITE" id="PS00927">
    <property type="entry name" value="TREHALASE_1"/>
    <property type="match status" value="1"/>
</dbReference>
<dbReference type="PROSITE" id="PS00928">
    <property type="entry name" value="TREHALASE_2"/>
    <property type="match status" value="1"/>
</dbReference>
<reference key="1">
    <citation type="journal article" date="2006" name="Proc. Natl. Acad. Sci. U.S.A.">
        <title>Identification of genes subject to positive selection in uropathogenic strains of Escherichia coli: a comparative genomics approach.</title>
        <authorList>
            <person name="Chen S.L."/>
            <person name="Hung C.-S."/>
            <person name="Xu J."/>
            <person name="Reigstad C.S."/>
            <person name="Magrini V."/>
            <person name="Sabo A."/>
            <person name="Blasiar D."/>
            <person name="Bieri T."/>
            <person name="Meyer R.R."/>
            <person name="Ozersky P."/>
            <person name="Armstrong J.R."/>
            <person name="Fulton R.S."/>
            <person name="Latreille J.P."/>
            <person name="Spieth J."/>
            <person name="Hooton T.M."/>
            <person name="Mardis E.R."/>
            <person name="Hultgren S.J."/>
            <person name="Gordon J.I."/>
        </authorList>
    </citation>
    <scope>NUCLEOTIDE SEQUENCE [LARGE SCALE GENOMIC DNA]</scope>
    <source>
        <strain>UTI89 / UPEC</strain>
    </source>
</reference>
<protein>
    <recommendedName>
        <fullName evidence="1">Periplasmic trehalase</fullName>
        <ecNumber evidence="1">3.2.1.28</ecNumber>
    </recommendedName>
    <alternativeName>
        <fullName evidence="1">Alpha,alpha-trehalase</fullName>
    </alternativeName>
    <alternativeName>
        <fullName evidence="1">Alpha,alpha-trehalose glucohydrolase</fullName>
    </alternativeName>
</protein>
<proteinExistence type="inferred from homology"/>
<evidence type="ECO:0000255" key="1">
    <source>
        <dbReference type="HAMAP-Rule" id="MF_01060"/>
    </source>
</evidence>
<evidence type="ECO:0000256" key="2">
    <source>
        <dbReference type="SAM" id="MobiDB-lite"/>
    </source>
</evidence>
<gene>
    <name evidence="1" type="primary">treA</name>
    <name type="ordered locus">UTI89_C1389</name>
</gene>
<name>TREA_ECOUT</name>